<keyword id="KW-1003">Cell membrane</keyword>
<keyword id="KW-0268">Exocytosis</keyword>
<keyword id="KW-0472">Membrane</keyword>
<keyword id="KW-0597">Phosphoprotein</keyword>
<keyword id="KW-1185">Reference proteome</keyword>
<keyword id="KW-0677">Repeat</keyword>
<dbReference type="EMBL" id="AB050741">
    <property type="protein sequence ID" value="BAB32651.1"/>
    <property type="molecule type" value="mRNA"/>
</dbReference>
<dbReference type="EMBL" id="BC005623">
    <property type="protein sequence ID" value="AAH05623.1"/>
    <property type="molecule type" value="mRNA"/>
</dbReference>
<dbReference type="SMR" id="Q99N80"/>
<dbReference type="FunCoup" id="Q99N80">
    <property type="interactions" value="152"/>
</dbReference>
<dbReference type="IntAct" id="Q99N80">
    <property type="interactions" value="2"/>
</dbReference>
<dbReference type="STRING" id="10090.ENSMUSP00000030674"/>
<dbReference type="GlyGen" id="Q99N80">
    <property type="glycosylation" value="1 site"/>
</dbReference>
<dbReference type="iPTMnet" id="Q99N80"/>
<dbReference type="PhosphoSitePlus" id="Q99N80"/>
<dbReference type="PaxDb" id="10090-ENSMUSP00000030674"/>
<dbReference type="ProteomicsDB" id="263197"/>
<dbReference type="AGR" id="MGI:1933365"/>
<dbReference type="MGI" id="MGI:1933365">
    <property type="gene designation" value="Sytl1"/>
</dbReference>
<dbReference type="eggNOG" id="KOG1028">
    <property type="taxonomic scope" value="Eukaryota"/>
</dbReference>
<dbReference type="InParanoid" id="Q99N80"/>
<dbReference type="Reactome" id="R-MMU-8854214">
    <property type="pathway name" value="TBC/RABGAPs"/>
</dbReference>
<dbReference type="PRO" id="PR:Q99N80"/>
<dbReference type="Proteomes" id="UP000000589">
    <property type="component" value="Unplaced"/>
</dbReference>
<dbReference type="RNAct" id="Q99N80">
    <property type="molecule type" value="protein"/>
</dbReference>
<dbReference type="GO" id="GO:0012505">
    <property type="term" value="C:endomembrane system"/>
    <property type="evidence" value="ECO:0007669"/>
    <property type="project" value="UniProtKB-SubCell"/>
</dbReference>
<dbReference type="GO" id="GO:0042470">
    <property type="term" value="C:melanosome"/>
    <property type="evidence" value="ECO:0000314"/>
    <property type="project" value="UniProtKB"/>
</dbReference>
<dbReference type="GO" id="GO:0016020">
    <property type="term" value="C:membrane"/>
    <property type="evidence" value="ECO:0000314"/>
    <property type="project" value="MGI"/>
</dbReference>
<dbReference type="GO" id="GO:0005886">
    <property type="term" value="C:plasma membrane"/>
    <property type="evidence" value="ECO:0000314"/>
    <property type="project" value="UniProtKB"/>
</dbReference>
<dbReference type="GO" id="GO:0042043">
    <property type="term" value="F:neurexin family protein binding"/>
    <property type="evidence" value="ECO:0000314"/>
    <property type="project" value="UniProtKB"/>
</dbReference>
<dbReference type="GO" id="GO:0031267">
    <property type="term" value="F:small GTPase binding"/>
    <property type="evidence" value="ECO:0007669"/>
    <property type="project" value="InterPro"/>
</dbReference>
<dbReference type="GO" id="GO:0006887">
    <property type="term" value="P:exocytosis"/>
    <property type="evidence" value="ECO:0000314"/>
    <property type="project" value="UniProtKB"/>
</dbReference>
<dbReference type="GO" id="GO:0006886">
    <property type="term" value="P:intracellular protein transport"/>
    <property type="evidence" value="ECO:0007669"/>
    <property type="project" value="InterPro"/>
</dbReference>
<dbReference type="GO" id="GO:0016192">
    <property type="term" value="P:vesicle-mediated transport"/>
    <property type="evidence" value="ECO:0000314"/>
    <property type="project" value="UniProtKB"/>
</dbReference>
<dbReference type="CDD" id="cd04020">
    <property type="entry name" value="C2B_SLP_1-2-3-4"/>
    <property type="match status" value="1"/>
</dbReference>
<dbReference type="FunFam" id="2.60.40.150:FF:000108">
    <property type="entry name" value="Synaptotagmin like 1"/>
    <property type="match status" value="1"/>
</dbReference>
<dbReference type="FunFam" id="2.60.40.150:FF:000006">
    <property type="entry name" value="Synaptotagmin-like 5, isoform CRA_a"/>
    <property type="match status" value="1"/>
</dbReference>
<dbReference type="Gene3D" id="6.10.250.3000">
    <property type="match status" value="1"/>
</dbReference>
<dbReference type="Gene3D" id="2.60.40.150">
    <property type="entry name" value="C2 domain"/>
    <property type="match status" value="2"/>
</dbReference>
<dbReference type="InterPro" id="IPR000008">
    <property type="entry name" value="C2_dom"/>
</dbReference>
<dbReference type="InterPro" id="IPR035892">
    <property type="entry name" value="C2_domain_sf"/>
</dbReference>
<dbReference type="InterPro" id="IPR010911">
    <property type="entry name" value="Rab_BD"/>
</dbReference>
<dbReference type="InterPro" id="IPR043567">
    <property type="entry name" value="SYTL1-5_C2B"/>
</dbReference>
<dbReference type="PANTHER" id="PTHR45716">
    <property type="entry name" value="BITESIZE, ISOFORM I"/>
    <property type="match status" value="1"/>
</dbReference>
<dbReference type="PANTHER" id="PTHR45716:SF3">
    <property type="entry name" value="SYNAPTOTAGMIN-LIKE PROTEIN 1"/>
    <property type="match status" value="1"/>
</dbReference>
<dbReference type="Pfam" id="PF00168">
    <property type="entry name" value="C2"/>
    <property type="match status" value="2"/>
</dbReference>
<dbReference type="SMART" id="SM00239">
    <property type="entry name" value="C2"/>
    <property type="match status" value="2"/>
</dbReference>
<dbReference type="SUPFAM" id="SSF49562">
    <property type="entry name" value="C2 domain (Calcium/lipid-binding domain, CaLB)"/>
    <property type="match status" value="2"/>
</dbReference>
<dbReference type="PROSITE" id="PS50004">
    <property type="entry name" value="C2"/>
    <property type="match status" value="2"/>
</dbReference>
<dbReference type="PROSITE" id="PS50916">
    <property type="entry name" value="RABBD"/>
    <property type="match status" value="1"/>
</dbReference>
<name>SYTL1_MOUSE</name>
<gene>
    <name type="primary">Sytl1</name>
    <name type="synonym">Slp1</name>
</gene>
<protein>
    <recommendedName>
        <fullName>Synaptotagmin-like protein 1</fullName>
    </recommendedName>
    <alternativeName>
        <fullName>Exophilin-7</fullName>
    </alternativeName>
</protein>
<accession>Q99N80</accession>
<accession>Q99J26</accession>
<sequence length="567" mass="62362">MPQRGHPSQERLWALPSLPMAHGPGSEVEGLLDLSFLTEEEQEAISDVLKRDAHLRQLEEGRVSKLRASLEDPWQLKILTGDWFQEARSQRHHHAHFGSDLVRASIRRKKSPKGDQALGSDGEAEAAGEDTIEGEPESRVSIEVAAPERSTETQGPDLSSPYVPSKASEGQEEEPQDHECELEAPGEGGVQVAEADPELDPEQKAEQESQPTPAQSKATSKILENGEEAPGLGPSLDRMLSSSSSVSSLNSSTLSGSLMSLSGEEAGTVQVRGSVLFSLHYEPGTSELRVQVIQCQGLAAARRRRSDPYVKSYLLPDKQSKRKTSVKKRNLNPIFNETLRHSVQQADLPGRVLSLSVWHRESLGRNIFLGEVEVPLDTWNWDSEATWLPLQPRVPPSPDELPSRGLLSLSLKYVPAGSEGGGQPQSGELHFWVKEAQSLVPLRPGSLDTYIQCSVLPDDSRASRQRTRVVRRSLSPVFNHTMVYDGFGPADLRQACAELSLWDHGALASRQLGGTRLSLGTGSSYGLQVPWMDSTPEEKQLWQTLLERPCEWVDGLLPLRTNLVPRA</sequence>
<organism>
    <name type="scientific">Mus musculus</name>
    <name type="common">Mouse</name>
    <dbReference type="NCBI Taxonomy" id="10090"/>
    <lineage>
        <taxon>Eukaryota</taxon>
        <taxon>Metazoa</taxon>
        <taxon>Chordata</taxon>
        <taxon>Craniata</taxon>
        <taxon>Vertebrata</taxon>
        <taxon>Euteleostomi</taxon>
        <taxon>Mammalia</taxon>
        <taxon>Eutheria</taxon>
        <taxon>Euarchontoglires</taxon>
        <taxon>Glires</taxon>
        <taxon>Rodentia</taxon>
        <taxon>Myomorpha</taxon>
        <taxon>Muroidea</taxon>
        <taxon>Muridae</taxon>
        <taxon>Murinae</taxon>
        <taxon>Mus</taxon>
        <taxon>Mus</taxon>
    </lineage>
</organism>
<evidence type="ECO:0000250" key="1"/>
<evidence type="ECO:0000250" key="2">
    <source>
        <dbReference type="UniProtKB" id="Q8IYJ3"/>
    </source>
</evidence>
<evidence type="ECO:0000255" key="3">
    <source>
        <dbReference type="PROSITE-ProRule" id="PRU00041"/>
    </source>
</evidence>
<evidence type="ECO:0000255" key="4">
    <source>
        <dbReference type="PROSITE-ProRule" id="PRU00234"/>
    </source>
</evidence>
<evidence type="ECO:0000256" key="5">
    <source>
        <dbReference type="SAM" id="MobiDB-lite"/>
    </source>
</evidence>
<evidence type="ECO:0000269" key="6">
    <source>
    </source>
</evidence>
<evidence type="ECO:0000305" key="7"/>
<evidence type="ECO:0007744" key="8">
    <source>
    </source>
</evidence>
<reference key="1">
    <citation type="journal article" date="2001" name="Biochem. Biophys. Res. Commun.">
        <title>Synaptotagmin-like protein 1-3: a novel family of C-terminal-type tandem C2 proteins.</title>
        <authorList>
            <person name="Fukuda M."/>
            <person name="Mikoshiba K."/>
        </authorList>
    </citation>
    <scope>NUCLEOTIDE SEQUENCE [MRNA]</scope>
    <scope>INTERACTION WITH NRXN1</scope>
    <source>
        <strain>BALB/cJ</strain>
        <tissue>Brain</tissue>
    </source>
</reference>
<reference key="2">
    <citation type="journal article" date="2004" name="Genome Res.">
        <title>The status, quality, and expansion of the NIH full-length cDNA project: the Mammalian Gene Collection (MGC).</title>
        <authorList>
            <consortium name="The MGC Project Team"/>
        </authorList>
    </citation>
    <scope>NUCLEOTIDE SEQUENCE [LARGE SCALE MRNA]</scope>
    <source>
        <tissue>Mammary cancer</tissue>
    </source>
</reference>
<reference key="3">
    <citation type="journal article" date="2002" name="J. Biol. Chem.">
        <title>The Slp homology domain of synaptotagmin-like proteins 1-4 and Slac2 functions as a novel Rab27A binding domain.</title>
        <authorList>
            <person name="Kuroda T.S."/>
            <person name="Fukuda M."/>
            <person name="Ariga H."/>
            <person name="Mikoshiba K."/>
        </authorList>
    </citation>
    <scope>INTERACTION WITH RAB27A</scope>
</reference>
<reference key="4">
    <citation type="journal article" date="2008" name="Traffic">
        <title>Slp1 and Slp2-a localize to the plasma membrane of CTL and contribute to secretion from the immunological synapse.</title>
        <authorList>
            <person name="Holt O."/>
            <person name="Kanno E."/>
            <person name="Bossi G."/>
            <person name="Booth S."/>
            <person name="Daniele T."/>
            <person name="Santoro A."/>
            <person name="Arico M."/>
            <person name="Saegusa C."/>
            <person name="Fukuda M."/>
            <person name="Griffiths G.M."/>
        </authorList>
    </citation>
    <scope>FUNCTION</scope>
    <scope>SUBCELLULAR LOCATION</scope>
    <scope>INTERACTION WITH RAB27A</scope>
    <scope>TISSUE SPECIFICITY</scope>
</reference>
<reference key="5">
    <citation type="journal article" date="2010" name="Cell">
        <title>A tissue-specific atlas of mouse protein phosphorylation and expression.</title>
        <authorList>
            <person name="Huttlin E.L."/>
            <person name="Jedrychowski M.P."/>
            <person name="Elias J.E."/>
            <person name="Goswami T."/>
            <person name="Rad R."/>
            <person name="Beausoleil S.A."/>
            <person name="Villen J."/>
            <person name="Haas W."/>
            <person name="Sowa M.E."/>
            <person name="Gygi S.P."/>
        </authorList>
    </citation>
    <scope>PHOSPHORYLATION [LARGE SCALE ANALYSIS] AT SER-120</scope>
    <scope>IDENTIFICATION BY MASS SPECTROMETRY [LARGE SCALE ANALYSIS]</scope>
    <source>
        <tissue>Pancreas</tissue>
    </source>
</reference>
<proteinExistence type="evidence at protein level"/>
<feature type="chain" id="PRO_0000190212" description="Synaptotagmin-like protein 1">
    <location>
        <begin position="1"/>
        <end position="567"/>
    </location>
</feature>
<feature type="domain" description="RabBD" evidence="4">
    <location>
        <begin position="31"/>
        <end position="87"/>
    </location>
</feature>
<feature type="domain" description="C2 1" evidence="3">
    <location>
        <begin position="271"/>
        <end position="390"/>
    </location>
</feature>
<feature type="domain" description="C2 2" evidence="3">
    <location>
        <begin position="403"/>
        <end position="532"/>
    </location>
</feature>
<feature type="region of interest" description="Disordered" evidence="5">
    <location>
        <begin position="103"/>
        <end position="255"/>
    </location>
</feature>
<feature type="compositionally biased region" description="Acidic residues" evidence="5">
    <location>
        <begin position="122"/>
        <end position="135"/>
    </location>
</feature>
<feature type="compositionally biased region" description="Acidic residues" evidence="5">
    <location>
        <begin position="170"/>
        <end position="184"/>
    </location>
</feature>
<feature type="compositionally biased region" description="Polar residues" evidence="5">
    <location>
        <begin position="208"/>
        <end position="219"/>
    </location>
</feature>
<feature type="compositionally biased region" description="Low complexity" evidence="5">
    <location>
        <begin position="235"/>
        <end position="255"/>
    </location>
</feature>
<feature type="modified residue" description="Phosphoserine" evidence="8">
    <location>
        <position position="120"/>
    </location>
</feature>
<feature type="modified residue" description="Phosphoserine" evidence="2">
    <location>
        <position position="220"/>
    </location>
</feature>
<feature type="sequence conflict" description="In Ref. 1; BAB32651." evidence="7" ref="1">
    <original>H</original>
    <variation>Q</variation>
    <location>
        <position position="178"/>
    </location>
</feature>
<comment type="function">
    <text evidence="1 6">Binds phosphatidylinositol 3,4,5-trisphosphate (By similarity). May play a role in vesicle trafficking. Acts as a RAB27A effector protein and may play a role in cytotoxic granule exocytosis in lymphocytes.</text>
</comment>
<comment type="subunit">
    <text evidence="1">Monomer. Binds NCF2 and NRXN1 (By similarity). Binds RAB27A that has been activated by GTP-binding via its N-terminus.</text>
</comment>
<comment type="subcellular location">
    <subcellularLocation>
        <location evidence="6">Endomembrane system</location>
        <topology evidence="6">Peripheral membrane protein</topology>
    </subcellularLocation>
    <subcellularLocation>
        <location evidence="6">Cell membrane</location>
    </subcellularLocation>
</comment>
<comment type="tissue specificity">
    <text evidence="6">Highly expressed in lung. Detected at lower levels in spleen, liver and kidney, and at very low levels in heart, brain and skeletal muscle. Expressed in cytotoxic T-lymphocytes (CTL).</text>
</comment>